<proteinExistence type="inferred from homology"/>
<comment type="function">
    <text evidence="1">Required for accurate and efficient protein synthesis under certain stress conditions. May act as a fidelity factor of the translation reaction, by catalyzing a one-codon backward translocation of tRNAs on improperly translocated ribosomes. Back-translocation proceeds from a post-translocation (POST) complex to a pre-translocation (PRE) complex, thus giving elongation factor G a second chance to translocate the tRNAs correctly. Binds to ribosomes in a GTP-dependent manner.</text>
</comment>
<comment type="catalytic activity">
    <reaction evidence="1">
        <text>GTP + H2O = GDP + phosphate + H(+)</text>
        <dbReference type="Rhea" id="RHEA:19669"/>
        <dbReference type="ChEBI" id="CHEBI:15377"/>
        <dbReference type="ChEBI" id="CHEBI:15378"/>
        <dbReference type="ChEBI" id="CHEBI:37565"/>
        <dbReference type="ChEBI" id="CHEBI:43474"/>
        <dbReference type="ChEBI" id="CHEBI:58189"/>
        <dbReference type="EC" id="3.6.5.n1"/>
    </reaction>
</comment>
<comment type="subcellular location">
    <subcellularLocation>
        <location evidence="1">Cell inner membrane</location>
        <topology evidence="1">Peripheral membrane protein</topology>
        <orientation evidence="1">Cytoplasmic side</orientation>
    </subcellularLocation>
</comment>
<comment type="similarity">
    <text evidence="1">Belongs to the TRAFAC class translation factor GTPase superfamily. Classic translation factor GTPase family. LepA subfamily.</text>
</comment>
<name>LEPA_SORC5</name>
<gene>
    <name evidence="1" type="primary">lepA</name>
    <name type="ordered locus">sce3836</name>
</gene>
<reference key="1">
    <citation type="journal article" date="2007" name="Nat. Biotechnol.">
        <title>Complete genome sequence of the myxobacterium Sorangium cellulosum.</title>
        <authorList>
            <person name="Schneiker S."/>
            <person name="Perlova O."/>
            <person name="Kaiser O."/>
            <person name="Gerth K."/>
            <person name="Alici A."/>
            <person name="Altmeyer M.O."/>
            <person name="Bartels D."/>
            <person name="Bekel T."/>
            <person name="Beyer S."/>
            <person name="Bode E."/>
            <person name="Bode H.B."/>
            <person name="Bolten C.J."/>
            <person name="Choudhuri J.V."/>
            <person name="Doss S."/>
            <person name="Elnakady Y.A."/>
            <person name="Frank B."/>
            <person name="Gaigalat L."/>
            <person name="Goesmann A."/>
            <person name="Groeger C."/>
            <person name="Gross F."/>
            <person name="Jelsbak L."/>
            <person name="Jelsbak L."/>
            <person name="Kalinowski J."/>
            <person name="Kegler C."/>
            <person name="Knauber T."/>
            <person name="Konietzny S."/>
            <person name="Kopp M."/>
            <person name="Krause L."/>
            <person name="Krug D."/>
            <person name="Linke B."/>
            <person name="Mahmud T."/>
            <person name="Martinez-Arias R."/>
            <person name="McHardy A.C."/>
            <person name="Merai M."/>
            <person name="Meyer F."/>
            <person name="Mormann S."/>
            <person name="Munoz-Dorado J."/>
            <person name="Perez J."/>
            <person name="Pradella S."/>
            <person name="Rachid S."/>
            <person name="Raddatz G."/>
            <person name="Rosenau F."/>
            <person name="Rueckert C."/>
            <person name="Sasse F."/>
            <person name="Scharfe M."/>
            <person name="Schuster S.C."/>
            <person name="Suen G."/>
            <person name="Treuner-Lange A."/>
            <person name="Velicer G.J."/>
            <person name="Vorholter F.-J."/>
            <person name="Weissman K.J."/>
            <person name="Welch R.D."/>
            <person name="Wenzel S.C."/>
            <person name="Whitworth D.E."/>
            <person name="Wilhelm S."/>
            <person name="Wittmann C."/>
            <person name="Bloecker H."/>
            <person name="Puehler A."/>
            <person name="Mueller R."/>
        </authorList>
    </citation>
    <scope>NUCLEOTIDE SEQUENCE [LARGE SCALE GENOMIC DNA]</scope>
    <source>
        <strain>So ce56</strain>
    </source>
</reference>
<feature type="chain" id="PRO_1000075150" description="Elongation factor 4">
    <location>
        <begin position="1"/>
        <end position="600"/>
    </location>
</feature>
<feature type="domain" description="tr-type G">
    <location>
        <begin position="6"/>
        <end position="188"/>
    </location>
</feature>
<feature type="binding site" evidence="1">
    <location>
        <begin position="18"/>
        <end position="23"/>
    </location>
    <ligand>
        <name>GTP</name>
        <dbReference type="ChEBI" id="CHEBI:37565"/>
    </ligand>
</feature>
<feature type="binding site" evidence="1">
    <location>
        <begin position="135"/>
        <end position="138"/>
    </location>
    <ligand>
        <name>GTP</name>
        <dbReference type="ChEBI" id="CHEBI:37565"/>
    </ligand>
</feature>
<sequence length="600" mass="66371">MPVDSKLIRNFSIIAHIDHGKSTLADRILDATGALTAREQKEQFLDKMDIERERGITIKAQTVRLDYTAKDGQTYRLHLIDTPGHVDFNYEVSRSLQACEGALLVVDATQGVEAQTLANVFLALDNNLAILPVLNKIDLPSADIERTTREIEDVIGLDCSGAIPASAKTGIGIAEILEAVVERIPAPKGDPNAAPRALIFDSWYDSYRGAVVMVRVVDGIIRKGQKVRFMATGRDYEVTEMGVFTPHATAITELGPGEVGFLVGNIKSVVDTKIGDTVTDAVHPATTPLPGFKEVKPMVFAGIFPTDSAQYEDLRDALSKLHMNDAAFVFEPDTSEALGFGFRCGFLGLLHMEIIQERLEREYNLDLITTAPSVVYHCYLNDGSMKSIENPAKLPPPNLTDRIEEPIFRMTVHVPSTYVGAVLALCQERRGEQKSIQYASSDRVIITYDMPLSEVLFDFHDKLKSVSRGYASMDYELVGYRADDLIKLDMLVNGDPLDALSVIVHRDKAYARGRDLAVKLKDIVPRQQYEVAIQAAIGSKVIARTTVKAMRKDVTAKCYGGDISRKRKLLEKQKEGKKRMKMVGSVEIPQEAFLAILKID</sequence>
<protein>
    <recommendedName>
        <fullName evidence="1">Elongation factor 4</fullName>
        <shortName evidence="1">EF-4</shortName>
        <ecNumber evidence="1">3.6.5.n1</ecNumber>
    </recommendedName>
    <alternativeName>
        <fullName evidence="1">Ribosomal back-translocase LepA</fullName>
    </alternativeName>
</protein>
<evidence type="ECO:0000255" key="1">
    <source>
        <dbReference type="HAMAP-Rule" id="MF_00071"/>
    </source>
</evidence>
<accession>A9GWZ4</accession>
<keyword id="KW-0997">Cell inner membrane</keyword>
<keyword id="KW-1003">Cell membrane</keyword>
<keyword id="KW-0342">GTP-binding</keyword>
<keyword id="KW-0378">Hydrolase</keyword>
<keyword id="KW-0472">Membrane</keyword>
<keyword id="KW-0547">Nucleotide-binding</keyword>
<keyword id="KW-0648">Protein biosynthesis</keyword>
<keyword id="KW-1185">Reference proteome</keyword>
<dbReference type="EC" id="3.6.5.n1" evidence="1"/>
<dbReference type="EMBL" id="AM746676">
    <property type="protein sequence ID" value="CAN93996.1"/>
    <property type="molecule type" value="Genomic_DNA"/>
</dbReference>
<dbReference type="RefSeq" id="WP_012236466.1">
    <property type="nucleotide sequence ID" value="NC_010162.1"/>
</dbReference>
<dbReference type="SMR" id="A9GWZ4"/>
<dbReference type="STRING" id="448385.sce3836"/>
<dbReference type="KEGG" id="scl:sce3836"/>
<dbReference type="eggNOG" id="COG0481">
    <property type="taxonomic scope" value="Bacteria"/>
</dbReference>
<dbReference type="HOGENOM" id="CLU_009995_3_3_7"/>
<dbReference type="OrthoDB" id="9760518at2"/>
<dbReference type="BioCyc" id="SCEL448385:SCE_RS19665-MONOMER"/>
<dbReference type="Proteomes" id="UP000002139">
    <property type="component" value="Chromosome"/>
</dbReference>
<dbReference type="GO" id="GO:0005886">
    <property type="term" value="C:plasma membrane"/>
    <property type="evidence" value="ECO:0007669"/>
    <property type="project" value="UniProtKB-SubCell"/>
</dbReference>
<dbReference type="GO" id="GO:0005525">
    <property type="term" value="F:GTP binding"/>
    <property type="evidence" value="ECO:0007669"/>
    <property type="project" value="UniProtKB-UniRule"/>
</dbReference>
<dbReference type="GO" id="GO:0003924">
    <property type="term" value="F:GTPase activity"/>
    <property type="evidence" value="ECO:0007669"/>
    <property type="project" value="UniProtKB-UniRule"/>
</dbReference>
<dbReference type="GO" id="GO:0043022">
    <property type="term" value="F:ribosome binding"/>
    <property type="evidence" value="ECO:0007669"/>
    <property type="project" value="UniProtKB-UniRule"/>
</dbReference>
<dbReference type="GO" id="GO:0003746">
    <property type="term" value="F:translation elongation factor activity"/>
    <property type="evidence" value="ECO:0007669"/>
    <property type="project" value="UniProtKB-UniRule"/>
</dbReference>
<dbReference type="GO" id="GO:0045727">
    <property type="term" value="P:positive regulation of translation"/>
    <property type="evidence" value="ECO:0007669"/>
    <property type="project" value="UniProtKB-UniRule"/>
</dbReference>
<dbReference type="CDD" id="cd03699">
    <property type="entry name" value="EF4_II"/>
    <property type="match status" value="1"/>
</dbReference>
<dbReference type="CDD" id="cd16260">
    <property type="entry name" value="EF4_III"/>
    <property type="match status" value="1"/>
</dbReference>
<dbReference type="CDD" id="cd01890">
    <property type="entry name" value="LepA"/>
    <property type="match status" value="1"/>
</dbReference>
<dbReference type="CDD" id="cd03709">
    <property type="entry name" value="lepA_C"/>
    <property type="match status" value="1"/>
</dbReference>
<dbReference type="FunFam" id="3.40.50.300:FF:000078">
    <property type="entry name" value="Elongation factor 4"/>
    <property type="match status" value="1"/>
</dbReference>
<dbReference type="FunFam" id="2.40.30.10:FF:000015">
    <property type="entry name" value="Translation factor GUF1, mitochondrial"/>
    <property type="match status" value="1"/>
</dbReference>
<dbReference type="FunFam" id="3.30.70.240:FF:000007">
    <property type="entry name" value="Translation factor GUF1, mitochondrial"/>
    <property type="match status" value="1"/>
</dbReference>
<dbReference type="FunFam" id="3.30.70.2570:FF:000001">
    <property type="entry name" value="Translation factor GUF1, mitochondrial"/>
    <property type="match status" value="1"/>
</dbReference>
<dbReference type="FunFam" id="3.30.70.870:FF:000004">
    <property type="entry name" value="Translation factor GUF1, mitochondrial"/>
    <property type="match status" value="1"/>
</dbReference>
<dbReference type="Gene3D" id="3.30.70.240">
    <property type="match status" value="1"/>
</dbReference>
<dbReference type="Gene3D" id="3.30.70.2570">
    <property type="entry name" value="Elongation factor 4, C-terminal domain"/>
    <property type="match status" value="1"/>
</dbReference>
<dbReference type="Gene3D" id="3.30.70.870">
    <property type="entry name" value="Elongation Factor G (Translational Gtpase), domain 3"/>
    <property type="match status" value="1"/>
</dbReference>
<dbReference type="Gene3D" id="3.40.50.300">
    <property type="entry name" value="P-loop containing nucleotide triphosphate hydrolases"/>
    <property type="match status" value="1"/>
</dbReference>
<dbReference type="Gene3D" id="2.40.30.10">
    <property type="entry name" value="Translation factors"/>
    <property type="match status" value="1"/>
</dbReference>
<dbReference type="HAMAP" id="MF_00071">
    <property type="entry name" value="LepA"/>
    <property type="match status" value="1"/>
</dbReference>
<dbReference type="InterPro" id="IPR006297">
    <property type="entry name" value="EF-4"/>
</dbReference>
<dbReference type="InterPro" id="IPR041095">
    <property type="entry name" value="EFG_II"/>
</dbReference>
<dbReference type="InterPro" id="IPR035647">
    <property type="entry name" value="EFG_III/V"/>
</dbReference>
<dbReference type="InterPro" id="IPR000640">
    <property type="entry name" value="EFG_V-like"/>
</dbReference>
<dbReference type="InterPro" id="IPR004161">
    <property type="entry name" value="EFTu-like_2"/>
</dbReference>
<dbReference type="InterPro" id="IPR031157">
    <property type="entry name" value="G_TR_CS"/>
</dbReference>
<dbReference type="InterPro" id="IPR038363">
    <property type="entry name" value="LepA_C_sf"/>
</dbReference>
<dbReference type="InterPro" id="IPR013842">
    <property type="entry name" value="LepA_CTD"/>
</dbReference>
<dbReference type="InterPro" id="IPR035654">
    <property type="entry name" value="LepA_IV"/>
</dbReference>
<dbReference type="InterPro" id="IPR027417">
    <property type="entry name" value="P-loop_NTPase"/>
</dbReference>
<dbReference type="InterPro" id="IPR005225">
    <property type="entry name" value="Small_GTP-bd"/>
</dbReference>
<dbReference type="InterPro" id="IPR000795">
    <property type="entry name" value="T_Tr_GTP-bd_dom"/>
</dbReference>
<dbReference type="NCBIfam" id="TIGR01393">
    <property type="entry name" value="lepA"/>
    <property type="match status" value="1"/>
</dbReference>
<dbReference type="NCBIfam" id="TIGR00231">
    <property type="entry name" value="small_GTP"/>
    <property type="match status" value="1"/>
</dbReference>
<dbReference type="PANTHER" id="PTHR43512:SF4">
    <property type="entry name" value="TRANSLATION FACTOR GUF1 HOMOLOG, CHLOROPLASTIC"/>
    <property type="match status" value="1"/>
</dbReference>
<dbReference type="PANTHER" id="PTHR43512">
    <property type="entry name" value="TRANSLATION FACTOR GUF1-RELATED"/>
    <property type="match status" value="1"/>
</dbReference>
<dbReference type="Pfam" id="PF00679">
    <property type="entry name" value="EFG_C"/>
    <property type="match status" value="1"/>
</dbReference>
<dbReference type="Pfam" id="PF14492">
    <property type="entry name" value="EFG_III"/>
    <property type="match status" value="1"/>
</dbReference>
<dbReference type="Pfam" id="PF00009">
    <property type="entry name" value="GTP_EFTU"/>
    <property type="match status" value="1"/>
</dbReference>
<dbReference type="Pfam" id="PF03144">
    <property type="entry name" value="GTP_EFTU_D2"/>
    <property type="match status" value="1"/>
</dbReference>
<dbReference type="Pfam" id="PF06421">
    <property type="entry name" value="LepA_C"/>
    <property type="match status" value="1"/>
</dbReference>
<dbReference type="PRINTS" id="PR00315">
    <property type="entry name" value="ELONGATNFCT"/>
</dbReference>
<dbReference type="SMART" id="SM00838">
    <property type="entry name" value="EFG_C"/>
    <property type="match status" value="1"/>
</dbReference>
<dbReference type="SUPFAM" id="SSF54980">
    <property type="entry name" value="EF-G C-terminal domain-like"/>
    <property type="match status" value="2"/>
</dbReference>
<dbReference type="SUPFAM" id="SSF52540">
    <property type="entry name" value="P-loop containing nucleoside triphosphate hydrolases"/>
    <property type="match status" value="1"/>
</dbReference>
<dbReference type="PROSITE" id="PS00301">
    <property type="entry name" value="G_TR_1"/>
    <property type="match status" value="1"/>
</dbReference>
<dbReference type="PROSITE" id="PS51722">
    <property type="entry name" value="G_TR_2"/>
    <property type="match status" value="1"/>
</dbReference>
<organism>
    <name type="scientific">Sorangium cellulosum (strain So ce56)</name>
    <name type="common">Polyangium cellulosum (strain So ce56)</name>
    <dbReference type="NCBI Taxonomy" id="448385"/>
    <lineage>
        <taxon>Bacteria</taxon>
        <taxon>Pseudomonadati</taxon>
        <taxon>Myxococcota</taxon>
        <taxon>Polyangia</taxon>
        <taxon>Polyangiales</taxon>
        <taxon>Polyangiaceae</taxon>
        <taxon>Sorangium</taxon>
    </lineage>
</organism>